<dbReference type="EC" id="1.2.1.41" evidence="1"/>
<dbReference type="EMBL" id="BA000040">
    <property type="protein sequence ID" value="BAC45694.1"/>
    <property type="molecule type" value="Genomic_DNA"/>
</dbReference>
<dbReference type="RefSeq" id="NP_767069.1">
    <property type="nucleotide sequence ID" value="NC_004463.1"/>
</dbReference>
<dbReference type="RefSeq" id="WP_011083261.1">
    <property type="nucleotide sequence ID" value="NC_004463.1"/>
</dbReference>
<dbReference type="SMR" id="Q89X85"/>
<dbReference type="FunCoup" id="Q89X85">
    <property type="interactions" value="552"/>
</dbReference>
<dbReference type="STRING" id="224911.AAV28_41395"/>
<dbReference type="EnsemblBacteria" id="BAC45694">
    <property type="protein sequence ID" value="BAC45694"/>
    <property type="gene ID" value="BAC45694"/>
</dbReference>
<dbReference type="GeneID" id="46495575"/>
<dbReference type="KEGG" id="bja:blr0429"/>
<dbReference type="PATRIC" id="fig|224911.44.peg.8959"/>
<dbReference type="eggNOG" id="COG0014">
    <property type="taxonomic scope" value="Bacteria"/>
</dbReference>
<dbReference type="HOGENOM" id="CLU_030231_0_0_5"/>
<dbReference type="InParanoid" id="Q89X85"/>
<dbReference type="OrthoDB" id="9809970at2"/>
<dbReference type="PhylomeDB" id="Q89X85"/>
<dbReference type="UniPathway" id="UPA00098">
    <property type="reaction ID" value="UER00360"/>
</dbReference>
<dbReference type="Proteomes" id="UP000002526">
    <property type="component" value="Chromosome"/>
</dbReference>
<dbReference type="GO" id="GO:0005737">
    <property type="term" value="C:cytoplasm"/>
    <property type="evidence" value="ECO:0007669"/>
    <property type="project" value="UniProtKB-SubCell"/>
</dbReference>
<dbReference type="GO" id="GO:0004350">
    <property type="term" value="F:glutamate-5-semialdehyde dehydrogenase activity"/>
    <property type="evidence" value="ECO:0000318"/>
    <property type="project" value="GO_Central"/>
</dbReference>
<dbReference type="GO" id="GO:0050661">
    <property type="term" value="F:NADP binding"/>
    <property type="evidence" value="ECO:0007669"/>
    <property type="project" value="InterPro"/>
</dbReference>
<dbReference type="GO" id="GO:0055129">
    <property type="term" value="P:L-proline biosynthetic process"/>
    <property type="evidence" value="ECO:0007669"/>
    <property type="project" value="UniProtKB-UniRule"/>
</dbReference>
<dbReference type="CDD" id="cd07079">
    <property type="entry name" value="ALDH_F18-19_ProA-GPR"/>
    <property type="match status" value="1"/>
</dbReference>
<dbReference type="FunFam" id="3.40.309.10:FF:000006">
    <property type="entry name" value="Gamma-glutamyl phosphate reductase"/>
    <property type="match status" value="1"/>
</dbReference>
<dbReference type="Gene3D" id="3.40.605.10">
    <property type="entry name" value="Aldehyde Dehydrogenase, Chain A, domain 1"/>
    <property type="match status" value="1"/>
</dbReference>
<dbReference type="Gene3D" id="3.40.309.10">
    <property type="entry name" value="Aldehyde Dehydrogenase, Chain A, domain 2"/>
    <property type="match status" value="1"/>
</dbReference>
<dbReference type="HAMAP" id="MF_00412">
    <property type="entry name" value="ProA"/>
    <property type="match status" value="1"/>
</dbReference>
<dbReference type="InterPro" id="IPR016161">
    <property type="entry name" value="Ald_DH/histidinol_DH"/>
</dbReference>
<dbReference type="InterPro" id="IPR016163">
    <property type="entry name" value="Ald_DH_C"/>
</dbReference>
<dbReference type="InterPro" id="IPR016162">
    <property type="entry name" value="Ald_DH_N"/>
</dbReference>
<dbReference type="InterPro" id="IPR015590">
    <property type="entry name" value="Aldehyde_DH_dom"/>
</dbReference>
<dbReference type="InterPro" id="IPR020593">
    <property type="entry name" value="G-glutamylP_reductase_CS"/>
</dbReference>
<dbReference type="InterPro" id="IPR012134">
    <property type="entry name" value="Glu-5-SA_DH"/>
</dbReference>
<dbReference type="InterPro" id="IPR000965">
    <property type="entry name" value="GPR_dom"/>
</dbReference>
<dbReference type="NCBIfam" id="NF001221">
    <property type="entry name" value="PRK00197.1"/>
    <property type="match status" value="1"/>
</dbReference>
<dbReference type="NCBIfam" id="TIGR00407">
    <property type="entry name" value="proA"/>
    <property type="match status" value="1"/>
</dbReference>
<dbReference type="PANTHER" id="PTHR11063:SF8">
    <property type="entry name" value="DELTA-1-PYRROLINE-5-CARBOXYLATE SYNTHASE"/>
    <property type="match status" value="1"/>
</dbReference>
<dbReference type="PANTHER" id="PTHR11063">
    <property type="entry name" value="GLUTAMATE SEMIALDEHYDE DEHYDROGENASE"/>
    <property type="match status" value="1"/>
</dbReference>
<dbReference type="Pfam" id="PF00171">
    <property type="entry name" value="Aldedh"/>
    <property type="match status" value="1"/>
</dbReference>
<dbReference type="PIRSF" id="PIRSF000151">
    <property type="entry name" value="GPR"/>
    <property type="match status" value="1"/>
</dbReference>
<dbReference type="SUPFAM" id="SSF53720">
    <property type="entry name" value="ALDH-like"/>
    <property type="match status" value="1"/>
</dbReference>
<dbReference type="PROSITE" id="PS01223">
    <property type="entry name" value="PROA"/>
    <property type="match status" value="1"/>
</dbReference>
<accession>Q89X85</accession>
<feature type="chain" id="PRO_0000189704" description="Gamma-glutamyl phosphate reductase">
    <location>
        <begin position="1"/>
        <end position="435"/>
    </location>
</feature>
<evidence type="ECO:0000255" key="1">
    <source>
        <dbReference type="HAMAP-Rule" id="MF_00412"/>
    </source>
</evidence>
<comment type="function">
    <text evidence="1">Catalyzes the NADPH-dependent reduction of L-glutamate 5-phosphate into L-glutamate 5-semialdehyde and phosphate. The product spontaneously undergoes cyclization to form 1-pyrroline-5-carboxylate.</text>
</comment>
<comment type="catalytic activity">
    <reaction evidence="1">
        <text>L-glutamate 5-semialdehyde + phosphate + NADP(+) = L-glutamyl 5-phosphate + NADPH + H(+)</text>
        <dbReference type="Rhea" id="RHEA:19541"/>
        <dbReference type="ChEBI" id="CHEBI:15378"/>
        <dbReference type="ChEBI" id="CHEBI:43474"/>
        <dbReference type="ChEBI" id="CHEBI:57783"/>
        <dbReference type="ChEBI" id="CHEBI:58066"/>
        <dbReference type="ChEBI" id="CHEBI:58274"/>
        <dbReference type="ChEBI" id="CHEBI:58349"/>
        <dbReference type="EC" id="1.2.1.41"/>
    </reaction>
</comment>
<comment type="pathway">
    <text evidence="1">Amino-acid biosynthesis; L-proline biosynthesis; L-glutamate 5-semialdehyde from L-glutamate: step 2/2.</text>
</comment>
<comment type="subcellular location">
    <subcellularLocation>
        <location evidence="1">Cytoplasm</location>
    </subcellularLocation>
</comment>
<comment type="similarity">
    <text evidence="1">Belongs to the gamma-glutamyl phosphate reductase family.</text>
</comment>
<protein>
    <recommendedName>
        <fullName evidence="1">Gamma-glutamyl phosphate reductase</fullName>
        <shortName evidence="1">GPR</shortName>
        <ecNumber evidence="1">1.2.1.41</ecNumber>
    </recommendedName>
    <alternativeName>
        <fullName evidence="1">Glutamate-5-semialdehyde dehydrogenase</fullName>
    </alternativeName>
    <alternativeName>
        <fullName evidence="1">Glutamyl-gamma-semialdehyde dehydrogenase</fullName>
        <shortName evidence="1">GSA dehydrogenase</shortName>
    </alternativeName>
</protein>
<sequence length="435" mass="45636">MAAPLKAVDGNADRTGDLQALMSDLAARARAAARVLALAPPEQKNRALEAMERAIRSNAAAILAANAEDVAEARASSNMTASFIDRLTLTPARVESMAEGIGIVRGIADPVGIVTESWQRPNGMTIERVRVPLGVVGVIFESRPNVAADAGVLCLKSGNAVILRGGSDSFRSCRAIHECLVQGLREAGLPEAAITLVPTRDRAAVGMMLSGLNGAIDVIVPRGGKSLVARVEQEARVPVFAHLEGVNHVYVDASADLAMAKSIVLNAKMRRTGVCGAAETLLVDRAAAATSLKPLVEMLIEAGCEVRGDDVVQKTDARVKPANDDDWDTEYLDAIIAAKVVDGVDGAIAHIQNHGSHHTDAIVSENEAAAKKFLSEVDSAIVLHNASTQFADGGEFGFGAEIGIATGRFHARGPVGAEQLTSFKYRVHGTGQTRP</sequence>
<reference key="1">
    <citation type="journal article" date="2002" name="DNA Res.">
        <title>Complete genomic sequence of nitrogen-fixing symbiotic bacterium Bradyrhizobium japonicum USDA110.</title>
        <authorList>
            <person name="Kaneko T."/>
            <person name="Nakamura Y."/>
            <person name="Sato S."/>
            <person name="Minamisawa K."/>
            <person name="Uchiumi T."/>
            <person name="Sasamoto S."/>
            <person name="Watanabe A."/>
            <person name="Idesawa K."/>
            <person name="Iriguchi M."/>
            <person name="Kawashima K."/>
            <person name="Kohara M."/>
            <person name="Matsumoto M."/>
            <person name="Shimpo S."/>
            <person name="Tsuruoka H."/>
            <person name="Wada T."/>
            <person name="Yamada M."/>
            <person name="Tabata S."/>
        </authorList>
    </citation>
    <scope>NUCLEOTIDE SEQUENCE [LARGE SCALE GENOMIC DNA]</scope>
    <source>
        <strain>JCM 10833 / BCRC 13528 / IAM 13628 / NBRC 14792 / USDA 110</strain>
    </source>
</reference>
<gene>
    <name evidence="1" type="primary">proA</name>
    <name type="ordered locus">blr0429</name>
</gene>
<organism>
    <name type="scientific">Bradyrhizobium diazoefficiens (strain JCM 10833 / BCRC 13528 / IAM 13628 / NBRC 14792 / USDA 110)</name>
    <dbReference type="NCBI Taxonomy" id="224911"/>
    <lineage>
        <taxon>Bacteria</taxon>
        <taxon>Pseudomonadati</taxon>
        <taxon>Pseudomonadota</taxon>
        <taxon>Alphaproteobacteria</taxon>
        <taxon>Hyphomicrobiales</taxon>
        <taxon>Nitrobacteraceae</taxon>
        <taxon>Bradyrhizobium</taxon>
    </lineage>
</organism>
<proteinExistence type="inferred from homology"/>
<name>PROA_BRADU</name>
<keyword id="KW-0028">Amino-acid biosynthesis</keyword>
<keyword id="KW-0963">Cytoplasm</keyword>
<keyword id="KW-0521">NADP</keyword>
<keyword id="KW-0560">Oxidoreductase</keyword>
<keyword id="KW-0641">Proline biosynthesis</keyword>
<keyword id="KW-1185">Reference proteome</keyword>